<protein>
    <recommendedName>
        <fullName evidence="1">3-keto-L-gulonate-6-phosphate decarboxylase UlaD</fullName>
        <ecNumber evidence="1">4.1.1.85</ecNumber>
    </recommendedName>
    <alternativeName>
        <fullName evidence="1">3-dehydro-L-gulonate-6-phosphate decarboxylase</fullName>
    </alternativeName>
    <alternativeName>
        <fullName evidence="1">KGPDC</fullName>
    </alternativeName>
    <alternativeName>
        <fullName evidence="1">L-ascorbate utilization protein D</fullName>
    </alternativeName>
</protein>
<evidence type="ECO:0000255" key="1">
    <source>
        <dbReference type="HAMAP-Rule" id="MF_01267"/>
    </source>
</evidence>
<name>ULAD_ECO5E</name>
<reference key="1">
    <citation type="journal article" date="2011" name="Proc. Natl. Acad. Sci. U.S.A.">
        <title>Genomic anatomy of Escherichia coli O157:H7 outbreaks.</title>
        <authorList>
            <person name="Eppinger M."/>
            <person name="Mammel M.K."/>
            <person name="Leclerc J.E."/>
            <person name="Ravel J."/>
            <person name="Cebula T.A."/>
        </authorList>
    </citation>
    <scope>NUCLEOTIDE SEQUENCE [LARGE SCALE GENOMIC DNA]</scope>
    <source>
        <strain>EC4115 / EHEC</strain>
    </source>
</reference>
<organism>
    <name type="scientific">Escherichia coli O157:H7 (strain EC4115 / EHEC)</name>
    <dbReference type="NCBI Taxonomy" id="444450"/>
    <lineage>
        <taxon>Bacteria</taxon>
        <taxon>Pseudomonadati</taxon>
        <taxon>Pseudomonadota</taxon>
        <taxon>Gammaproteobacteria</taxon>
        <taxon>Enterobacterales</taxon>
        <taxon>Enterobacteriaceae</taxon>
        <taxon>Escherichia</taxon>
    </lineage>
</organism>
<dbReference type="EC" id="4.1.1.85" evidence="1"/>
<dbReference type="EMBL" id="CP001164">
    <property type="protein sequence ID" value="ACI35122.1"/>
    <property type="molecule type" value="Genomic_DNA"/>
</dbReference>
<dbReference type="RefSeq" id="WP_000056760.1">
    <property type="nucleotide sequence ID" value="NC_011353.1"/>
</dbReference>
<dbReference type="SMR" id="B5Z2K2"/>
<dbReference type="GeneID" id="75202430"/>
<dbReference type="KEGG" id="ecf:ECH74115_5712"/>
<dbReference type="HOGENOM" id="CLU_081825_0_0_6"/>
<dbReference type="UniPathway" id="UPA00263">
    <property type="reaction ID" value="UER00378"/>
</dbReference>
<dbReference type="GO" id="GO:0033982">
    <property type="term" value="F:3-dehydro-L-gulonate-6-phosphate decarboxylase activity"/>
    <property type="evidence" value="ECO:0007669"/>
    <property type="project" value="UniProtKB-EC"/>
</dbReference>
<dbReference type="GO" id="GO:0000287">
    <property type="term" value="F:magnesium ion binding"/>
    <property type="evidence" value="ECO:0007669"/>
    <property type="project" value="UniProtKB-UniRule"/>
</dbReference>
<dbReference type="GO" id="GO:0004590">
    <property type="term" value="F:orotidine-5'-phosphate decarboxylase activity"/>
    <property type="evidence" value="ECO:0007669"/>
    <property type="project" value="InterPro"/>
</dbReference>
<dbReference type="GO" id="GO:0006207">
    <property type="term" value="P:'de novo' pyrimidine nucleobase biosynthetic process"/>
    <property type="evidence" value="ECO:0007669"/>
    <property type="project" value="InterPro"/>
</dbReference>
<dbReference type="GO" id="GO:0019854">
    <property type="term" value="P:L-ascorbic acid catabolic process"/>
    <property type="evidence" value="ECO:0007669"/>
    <property type="project" value="UniProtKB-UniRule"/>
</dbReference>
<dbReference type="CDD" id="cd04726">
    <property type="entry name" value="KGPDC_HPS"/>
    <property type="match status" value="1"/>
</dbReference>
<dbReference type="FunFam" id="3.20.20.70:FF:000022">
    <property type="entry name" value="3-keto-L-gulonate-6-phosphate decarboxylase UlaD"/>
    <property type="match status" value="1"/>
</dbReference>
<dbReference type="Gene3D" id="3.20.20.70">
    <property type="entry name" value="Aldolase class I"/>
    <property type="match status" value="1"/>
</dbReference>
<dbReference type="HAMAP" id="MF_01267">
    <property type="entry name" value="UlaD"/>
    <property type="match status" value="1"/>
</dbReference>
<dbReference type="InterPro" id="IPR023942">
    <property type="entry name" value="3-keto-L-gulonate6Pdecase_UlaD"/>
</dbReference>
<dbReference type="InterPro" id="IPR013785">
    <property type="entry name" value="Aldolase_TIM"/>
</dbReference>
<dbReference type="InterPro" id="IPR041710">
    <property type="entry name" value="HPS/KGPDC"/>
</dbReference>
<dbReference type="InterPro" id="IPR001754">
    <property type="entry name" value="OMPdeCOase_dom"/>
</dbReference>
<dbReference type="InterPro" id="IPR011060">
    <property type="entry name" value="RibuloseP-bd_barrel"/>
</dbReference>
<dbReference type="NCBIfam" id="NF009832">
    <property type="entry name" value="PRK13306.1"/>
    <property type="match status" value="1"/>
</dbReference>
<dbReference type="PANTHER" id="PTHR35039">
    <property type="entry name" value="3-KETO-L-GULONATE-6-PHOSPHATE DECARBOXYLASE SGBH-RELATED"/>
    <property type="match status" value="1"/>
</dbReference>
<dbReference type="PANTHER" id="PTHR35039:SF3">
    <property type="entry name" value="3-KETO-L-GULONATE-6-PHOSPHATE DECARBOXYLASE SGBH-RELATED"/>
    <property type="match status" value="1"/>
</dbReference>
<dbReference type="Pfam" id="PF00215">
    <property type="entry name" value="OMPdecase"/>
    <property type="match status" value="1"/>
</dbReference>
<dbReference type="SMART" id="SM00934">
    <property type="entry name" value="OMPdecase"/>
    <property type="match status" value="1"/>
</dbReference>
<dbReference type="SUPFAM" id="SSF51366">
    <property type="entry name" value="Ribulose-phoshate binding barrel"/>
    <property type="match status" value="1"/>
</dbReference>
<accession>B5Z2K2</accession>
<comment type="function">
    <text evidence="1">Catalyzes the decarboxylation of 3-keto-L-gulonate-6-P into L-xylulose-5-P. Is involved in the anaerobic L-ascorbate utilization.</text>
</comment>
<comment type="catalytic activity">
    <reaction evidence="1">
        <text>3-dehydro-L-gulonate 6-phosphate + H(+) = L-xylulose 5-phosphate + CO2</text>
        <dbReference type="Rhea" id="RHEA:14353"/>
        <dbReference type="ChEBI" id="CHEBI:15378"/>
        <dbReference type="ChEBI" id="CHEBI:16526"/>
        <dbReference type="ChEBI" id="CHEBI:57829"/>
        <dbReference type="ChEBI" id="CHEBI:58774"/>
        <dbReference type="EC" id="4.1.1.85"/>
    </reaction>
</comment>
<comment type="cofactor">
    <cofactor evidence="1">
        <name>Mg(2+)</name>
        <dbReference type="ChEBI" id="CHEBI:18420"/>
    </cofactor>
    <text evidence="1">Binds 1 Mg(2+) ion per subunit.</text>
</comment>
<comment type="pathway">
    <text evidence="1">Cofactor degradation; L-ascorbate degradation; D-xylulose 5-phosphate from L-ascorbate: step 2/4.</text>
</comment>
<comment type="subunit">
    <text evidence="1">Homodimer.</text>
</comment>
<comment type="induction">
    <text evidence="1">Induced by L-ascorbate. Repressed by UlaR.</text>
</comment>
<comment type="similarity">
    <text evidence="1">Belongs to the HPS/KGPDC family. KGPDC subfamily.</text>
</comment>
<keyword id="KW-0119">Carbohydrate metabolism</keyword>
<keyword id="KW-0210">Decarboxylase</keyword>
<keyword id="KW-0456">Lyase</keyword>
<keyword id="KW-0460">Magnesium</keyword>
<keyword id="KW-0479">Metal-binding</keyword>
<proteinExistence type="inferred from homology"/>
<sequence>MSLPMLQVALDNQTMDSAYETTRLIAEEVDIIEVGTILCVGEGVRAVRDLKALYPHKIVLADAKIADAGKILSRMCFEANADWVTVICCADINTAKGALDVAKEFNGDVQIELTGYWTWEQAQQWRDAGIQQVVYHRSRDAQAAGVAWGEADITAIKRLSDMGFKVTVTGGLALEDLPLFKGIPIHVFIAGRSIRDAASPVEAARQFKRSIAELWG</sequence>
<gene>
    <name evidence="1" type="primary">ulaD</name>
    <name type="ordered locus">ECH74115_5712</name>
</gene>
<feature type="chain" id="PRO_1000140110" description="3-keto-L-gulonate-6-phosphate decarboxylase UlaD">
    <location>
        <begin position="1"/>
        <end position="216"/>
    </location>
</feature>
<feature type="binding site" evidence="1">
    <location>
        <position position="11"/>
    </location>
    <ligand>
        <name>substrate</name>
    </ligand>
</feature>
<feature type="binding site" evidence="1">
    <location>
        <position position="33"/>
    </location>
    <ligand>
        <name>Mg(2+)</name>
        <dbReference type="ChEBI" id="CHEBI:18420"/>
    </ligand>
</feature>
<feature type="binding site" evidence="1">
    <location>
        <position position="62"/>
    </location>
    <ligand>
        <name>Mg(2+)</name>
        <dbReference type="ChEBI" id="CHEBI:18420"/>
    </ligand>
</feature>
<feature type="binding site" evidence="1">
    <location>
        <position position="192"/>
    </location>
    <ligand>
        <name>substrate</name>
    </ligand>
</feature>
<feature type="site" description="Transition state stabilizer" evidence="1">
    <location>
        <position position="64"/>
    </location>
</feature>
<feature type="site" description="Transition state stabilizer" evidence="1">
    <location>
        <position position="67"/>
    </location>
</feature>